<sequence>MSTGTLYDKVWNRHAVRELPTGETQLFVGLHLIHEVTSPQAFGMLEERDLSVAFPARTFATTDHIIPTADLERPFGDDQAETMLQVLERNTEAYDITFFDPSSGAQGIVHVVGPEQGLTQPGMTIVCGDSHTSTHGAFGTLGFGIGTSQIRDVLATQCIAMEKQDVRRIQVDGALGEGVYAKDIILKIIGELGVEGGIGYVYEYGGPAIKGLSMEGRMSICNMSVEGGARAGYVNPDLTTFEYMKGRPHAPSGAAWERAVDCWQQIQSDPDATYDDTVTFDGSAIEPMVTWGITPGQALGISEPIPDPARMDSGDRATAEKALDHMDLRPGRTMEGVNVDVAFLGSCTNARITDLREAASLLERLGRPVADDVRAMVVPGSQGVKQQAEDEGLADTFREAGFDWRGAGCSMCLGMNQDQLEGRELCASSSNRNFIGRQGSKDGRTVLMSPAMVVAAAVEGEVTDVRRLMRET</sequence>
<name>LEUC_SALRD</name>
<feature type="chain" id="PRO_1000063602" description="3-isopropylmalate dehydratase large subunit">
    <location>
        <begin position="1"/>
        <end position="472"/>
    </location>
</feature>
<feature type="binding site" evidence="1">
    <location>
        <position position="347"/>
    </location>
    <ligand>
        <name>[4Fe-4S] cluster</name>
        <dbReference type="ChEBI" id="CHEBI:49883"/>
    </ligand>
</feature>
<feature type="binding site" evidence="1">
    <location>
        <position position="409"/>
    </location>
    <ligand>
        <name>[4Fe-4S] cluster</name>
        <dbReference type="ChEBI" id="CHEBI:49883"/>
    </ligand>
</feature>
<feature type="binding site" evidence="1">
    <location>
        <position position="412"/>
    </location>
    <ligand>
        <name>[4Fe-4S] cluster</name>
        <dbReference type="ChEBI" id="CHEBI:49883"/>
    </ligand>
</feature>
<reference key="1">
    <citation type="journal article" date="2005" name="Proc. Natl. Acad. Sci. U.S.A.">
        <title>The genome of Salinibacter ruber: convergence and gene exchange among hyperhalophilic bacteria and archaea.</title>
        <authorList>
            <person name="Mongodin E.F."/>
            <person name="Nelson K.E."/>
            <person name="Daugherty S."/>
            <person name="DeBoy R.T."/>
            <person name="Wister J."/>
            <person name="Khouri H."/>
            <person name="Weidman J."/>
            <person name="Walsh D.A."/>
            <person name="Papke R.T."/>
            <person name="Sanchez Perez G."/>
            <person name="Sharma A.K."/>
            <person name="Nesbo C.L."/>
            <person name="MacLeod D."/>
            <person name="Bapteste E."/>
            <person name="Doolittle W.F."/>
            <person name="Charlebois R.L."/>
            <person name="Legault B."/>
            <person name="Rodriguez-Valera F."/>
        </authorList>
    </citation>
    <scope>NUCLEOTIDE SEQUENCE [LARGE SCALE GENOMIC DNA]</scope>
    <source>
        <strain>DSM 13855 / CECT 5946 / M31</strain>
    </source>
</reference>
<organism>
    <name type="scientific">Salinibacter ruber (strain DSM 13855 / M31)</name>
    <dbReference type="NCBI Taxonomy" id="309807"/>
    <lineage>
        <taxon>Bacteria</taxon>
        <taxon>Pseudomonadati</taxon>
        <taxon>Rhodothermota</taxon>
        <taxon>Rhodothermia</taxon>
        <taxon>Rhodothermales</taxon>
        <taxon>Salinibacteraceae</taxon>
        <taxon>Salinibacter</taxon>
    </lineage>
</organism>
<dbReference type="EC" id="4.2.1.33" evidence="1"/>
<dbReference type="EMBL" id="CP000159">
    <property type="protein sequence ID" value="ABC44241.1"/>
    <property type="molecule type" value="Genomic_DNA"/>
</dbReference>
<dbReference type="RefSeq" id="WP_011404876.1">
    <property type="nucleotide sequence ID" value="NC_007677.1"/>
</dbReference>
<dbReference type="RefSeq" id="YP_446255.1">
    <property type="nucleotide sequence ID" value="NC_007677.1"/>
</dbReference>
<dbReference type="SMR" id="Q2S0M6"/>
<dbReference type="STRING" id="309807.SRU_2150"/>
<dbReference type="EnsemblBacteria" id="ABC44241">
    <property type="protein sequence ID" value="ABC44241"/>
    <property type="gene ID" value="SRU_2150"/>
</dbReference>
<dbReference type="KEGG" id="sru:SRU_2150"/>
<dbReference type="PATRIC" id="fig|309807.25.peg.2235"/>
<dbReference type="eggNOG" id="COG0065">
    <property type="taxonomic scope" value="Bacteria"/>
</dbReference>
<dbReference type="HOGENOM" id="CLU_006714_3_4_10"/>
<dbReference type="OrthoDB" id="9802769at2"/>
<dbReference type="UniPathway" id="UPA00048">
    <property type="reaction ID" value="UER00071"/>
</dbReference>
<dbReference type="Proteomes" id="UP000008674">
    <property type="component" value="Chromosome"/>
</dbReference>
<dbReference type="GO" id="GO:0003861">
    <property type="term" value="F:3-isopropylmalate dehydratase activity"/>
    <property type="evidence" value="ECO:0007669"/>
    <property type="project" value="UniProtKB-UniRule"/>
</dbReference>
<dbReference type="GO" id="GO:0051539">
    <property type="term" value="F:4 iron, 4 sulfur cluster binding"/>
    <property type="evidence" value="ECO:0007669"/>
    <property type="project" value="UniProtKB-KW"/>
</dbReference>
<dbReference type="GO" id="GO:0046872">
    <property type="term" value="F:metal ion binding"/>
    <property type="evidence" value="ECO:0007669"/>
    <property type="project" value="UniProtKB-KW"/>
</dbReference>
<dbReference type="GO" id="GO:0009098">
    <property type="term" value="P:L-leucine biosynthetic process"/>
    <property type="evidence" value="ECO:0007669"/>
    <property type="project" value="UniProtKB-UniRule"/>
</dbReference>
<dbReference type="CDD" id="cd01583">
    <property type="entry name" value="IPMI"/>
    <property type="match status" value="1"/>
</dbReference>
<dbReference type="Gene3D" id="3.30.499.10">
    <property type="entry name" value="Aconitase, domain 3"/>
    <property type="match status" value="2"/>
</dbReference>
<dbReference type="HAMAP" id="MF_01026">
    <property type="entry name" value="LeuC_type1"/>
    <property type="match status" value="1"/>
</dbReference>
<dbReference type="InterPro" id="IPR004430">
    <property type="entry name" value="3-IsopropMal_deHydase_lsu"/>
</dbReference>
<dbReference type="InterPro" id="IPR015931">
    <property type="entry name" value="Acnase/IPM_dHydase_lsu_aba_1/3"/>
</dbReference>
<dbReference type="InterPro" id="IPR001030">
    <property type="entry name" value="Acoase/IPM_deHydtase_lsu_aba"/>
</dbReference>
<dbReference type="InterPro" id="IPR018136">
    <property type="entry name" value="Aconitase_4Fe-4S_BS"/>
</dbReference>
<dbReference type="InterPro" id="IPR036008">
    <property type="entry name" value="Aconitase_4Fe-4S_dom"/>
</dbReference>
<dbReference type="InterPro" id="IPR050067">
    <property type="entry name" value="IPM_dehydratase_rel_enz"/>
</dbReference>
<dbReference type="InterPro" id="IPR033941">
    <property type="entry name" value="IPMI_cat"/>
</dbReference>
<dbReference type="NCBIfam" id="TIGR00170">
    <property type="entry name" value="leuC"/>
    <property type="match status" value="1"/>
</dbReference>
<dbReference type="NCBIfam" id="NF004016">
    <property type="entry name" value="PRK05478.1"/>
    <property type="match status" value="1"/>
</dbReference>
<dbReference type="NCBIfam" id="NF009116">
    <property type="entry name" value="PRK12466.1"/>
    <property type="match status" value="1"/>
</dbReference>
<dbReference type="PANTHER" id="PTHR43822:SF9">
    <property type="entry name" value="3-ISOPROPYLMALATE DEHYDRATASE"/>
    <property type="match status" value="1"/>
</dbReference>
<dbReference type="PANTHER" id="PTHR43822">
    <property type="entry name" value="HOMOACONITASE, MITOCHONDRIAL-RELATED"/>
    <property type="match status" value="1"/>
</dbReference>
<dbReference type="Pfam" id="PF00330">
    <property type="entry name" value="Aconitase"/>
    <property type="match status" value="1"/>
</dbReference>
<dbReference type="PRINTS" id="PR00415">
    <property type="entry name" value="ACONITASE"/>
</dbReference>
<dbReference type="SUPFAM" id="SSF53732">
    <property type="entry name" value="Aconitase iron-sulfur domain"/>
    <property type="match status" value="1"/>
</dbReference>
<dbReference type="PROSITE" id="PS00450">
    <property type="entry name" value="ACONITASE_1"/>
    <property type="match status" value="1"/>
</dbReference>
<dbReference type="PROSITE" id="PS01244">
    <property type="entry name" value="ACONITASE_2"/>
    <property type="match status" value="1"/>
</dbReference>
<evidence type="ECO:0000255" key="1">
    <source>
        <dbReference type="HAMAP-Rule" id="MF_01026"/>
    </source>
</evidence>
<accession>Q2S0M6</accession>
<comment type="function">
    <text evidence="1">Catalyzes the isomerization between 2-isopropylmalate and 3-isopropylmalate, via the formation of 2-isopropylmaleate.</text>
</comment>
<comment type="catalytic activity">
    <reaction evidence="1">
        <text>(2R,3S)-3-isopropylmalate = (2S)-2-isopropylmalate</text>
        <dbReference type="Rhea" id="RHEA:32287"/>
        <dbReference type="ChEBI" id="CHEBI:1178"/>
        <dbReference type="ChEBI" id="CHEBI:35121"/>
        <dbReference type="EC" id="4.2.1.33"/>
    </reaction>
</comment>
<comment type="cofactor">
    <cofactor evidence="1">
        <name>[4Fe-4S] cluster</name>
        <dbReference type="ChEBI" id="CHEBI:49883"/>
    </cofactor>
    <text evidence="1">Binds 1 [4Fe-4S] cluster per subunit.</text>
</comment>
<comment type="pathway">
    <text evidence="1">Amino-acid biosynthesis; L-leucine biosynthesis; L-leucine from 3-methyl-2-oxobutanoate: step 2/4.</text>
</comment>
<comment type="subunit">
    <text evidence="1">Heterodimer of LeuC and LeuD.</text>
</comment>
<comment type="similarity">
    <text evidence="1">Belongs to the aconitase/IPM isomerase family. LeuC type 1 subfamily.</text>
</comment>
<protein>
    <recommendedName>
        <fullName evidence="1">3-isopropylmalate dehydratase large subunit</fullName>
        <ecNumber evidence="1">4.2.1.33</ecNumber>
    </recommendedName>
    <alternativeName>
        <fullName evidence="1">Alpha-IPM isomerase</fullName>
        <shortName evidence="1">IPMI</shortName>
    </alternativeName>
    <alternativeName>
        <fullName evidence="1">Isopropylmalate isomerase</fullName>
    </alternativeName>
</protein>
<gene>
    <name evidence="1" type="primary">leuC</name>
    <name type="ordered locus">SRU_2150</name>
</gene>
<proteinExistence type="inferred from homology"/>
<keyword id="KW-0004">4Fe-4S</keyword>
<keyword id="KW-0028">Amino-acid biosynthesis</keyword>
<keyword id="KW-0100">Branched-chain amino acid biosynthesis</keyword>
<keyword id="KW-0408">Iron</keyword>
<keyword id="KW-0411">Iron-sulfur</keyword>
<keyword id="KW-0432">Leucine biosynthesis</keyword>
<keyword id="KW-0456">Lyase</keyword>
<keyword id="KW-0479">Metal-binding</keyword>
<keyword id="KW-1185">Reference proteome</keyword>